<organism>
    <name type="scientific">Bacillus thuringiensis subsp. konkukian (strain 97-27)</name>
    <dbReference type="NCBI Taxonomy" id="281309"/>
    <lineage>
        <taxon>Bacteria</taxon>
        <taxon>Bacillati</taxon>
        <taxon>Bacillota</taxon>
        <taxon>Bacilli</taxon>
        <taxon>Bacillales</taxon>
        <taxon>Bacillaceae</taxon>
        <taxon>Bacillus</taxon>
        <taxon>Bacillus cereus group</taxon>
    </lineage>
</organism>
<accession>Q6HFE8</accession>
<sequence length="146" mass="15822">MLLQGTHRIGRMAMLLALADENESPVLSIPKGWKYCTGKVGSMNSQKVVAAMETAAKSNQVIETDVYRETHALYHAIMEALYGVTRGQIQLADVLRTVGLRFAIVRGTPYDGKKEGEWVAVALYGTIGAPVKGSEHEAIGLGINHI</sequence>
<comment type="function">
    <text evidence="1">Antiterminator that binds to cis-acting regulatory sequences on the mRNA in the presence of histidine, thereby suppressing transcription termination and activating the hut operon for histidine utilization.</text>
</comment>
<comment type="subunit">
    <text evidence="1">Homohexamer.</text>
</comment>
<comment type="similarity">
    <text evidence="1">Belongs to the HutP family.</text>
</comment>
<evidence type="ECO:0000255" key="1">
    <source>
        <dbReference type="HAMAP-Rule" id="MF_00779"/>
    </source>
</evidence>
<gene>
    <name evidence="1" type="primary">hutP</name>
    <name type="ordered locus">BT9727_3406</name>
</gene>
<keyword id="KW-0010">Activator</keyword>
<keyword id="KW-0369">Histidine metabolism</keyword>
<keyword id="KW-0694">RNA-binding</keyword>
<keyword id="KW-0804">Transcription</keyword>
<keyword id="KW-0805">Transcription regulation</keyword>
<name>HUTP_BACHK</name>
<protein>
    <recommendedName>
        <fullName evidence="1">Hut operon positive regulatory protein</fullName>
    </recommendedName>
</protein>
<reference key="1">
    <citation type="journal article" date="2006" name="J. Bacteriol.">
        <title>Pathogenomic sequence analysis of Bacillus cereus and Bacillus thuringiensis isolates closely related to Bacillus anthracis.</title>
        <authorList>
            <person name="Han C.S."/>
            <person name="Xie G."/>
            <person name="Challacombe J.F."/>
            <person name="Altherr M.R."/>
            <person name="Bhotika S.S."/>
            <person name="Bruce D."/>
            <person name="Campbell C.S."/>
            <person name="Campbell M.L."/>
            <person name="Chen J."/>
            <person name="Chertkov O."/>
            <person name="Cleland C."/>
            <person name="Dimitrijevic M."/>
            <person name="Doggett N.A."/>
            <person name="Fawcett J.J."/>
            <person name="Glavina T."/>
            <person name="Goodwin L.A."/>
            <person name="Hill K.K."/>
            <person name="Hitchcock P."/>
            <person name="Jackson P.J."/>
            <person name="Keim P."/>
            <person name="Kewalramani A.R."/>
            <person name="Longmire J."/>
            <person name="Lucas S."/>
            <person name="Malfatti S."/>
            <person name="McMurry K."/>
            <person name="Meincke L.J."/>
            <person name="Misra M."/>
            <person name="Moseman B.L."/>
            <person name="Mundt M."/>
            <person name="Munk A.C."/>
            <person name="Okinaka R.T."/>
            <person name="Parson-Quintana B."/>
            <person name="Reilly L.P."/>
            <person name="Richardson P."/>
            <person name="Robinson D.L."/>
            <person name="Rubin E."/>
            <person name="Saunders E."/>
            <person name="Tapia R."/>
            <person name="Tesmer J.G."/>
            <person name="Thayer N."/>
            <person name="Thompson L.S."/>
            <person name="Tice H."/>
            <person name="Ticknor L.O."/>
            <person name="Wills P.L."/>
            <person name="Brettin T.S."/>
            <person name="Gilna P."/>
        </authorList>
    </citation>
    <scope>NUCLEOTIDE SEQUENCE [LARGE SCALE GENOMIC DNA]</scope>
    <source>
        <strain>97-27</strain>
    </source>
</reference>
<proteinExistence type="inferred from homology"/>
<dbReference type="EMBL" id="AE017355">
    <property type="protein sequence ID" value="AAT63842.1"/>
    <property type="molecule type" value="Genomic_DNA"/>
</dbReference>
<dbReference type="RefSeq" id="WP_000926516.1">
    <property type="nucleotide sequence ID" value="NC_005957.1"/>
</dbReference>
<dbReference type="RefSeq" id="YP_037728.1">
    <property type="nucleotide sequence ID" value="NC_005957.1"/>
</dbReference>
<dbReference type="SMR" id="Q6HFE8"/>
<dbReference type="GeneID" id="93007528"/>
<dbReference type="KEGG" id="btk:BT9727_3406"/>
<dbReference type="PATRIC" id="fig|281309.8.peg.3633"/>
<dbReference type="HOGENOM" id="CLU_148478_0_0_9"/>
<dbReference type="Proteomes" id="UP000001301">
    <property type="component" value="Chromosome"/>
</dbReference>
<dbReference type="GO" id="GO:0003729">
    <property type="term" value="F:mRNA binding"/>
    <property type="evidence" value="ECO:0007669"/>
    <property type="project" value="UniProtKB-UniRule"/>
</dbReference>
<dbReference type="GO" id="GO:0006547">
    <property type="term" value="P:L-histidine metabolic process"/>
    <property type="evidence" value="ECO:0007669"/>
    <property type="project" value="UniProtKB-UniRule"/>
</dbReference>
<dbReference type="GO" id="GO:0010628">
    <property type="term" value="P:positive regulation of gene expression"/>
    <property type="evidence" value="ECO:0007669"/>
    <property type="project" value="UniProtKB-UniRule"/>
</dbReference>
<dbReference type="FunFam" id="3.40.1510.10:FF:000001">
    <property type="entry name" value="Hut operon positive regulatory protein"/>
    <property type="match status" value="1"/>
</dbReference>
<dbReference type="Gene3D" id="3.40.1510.10">
    <property type="entry name" value="Hut operon regulatory protein HutP"/>
    <property type="match status" value="1"/>
</dbReference>
<dbReference type="HAMAP" id="MF_00779">
    <property type="entry name" value="HutP"/>
    <property type="match status" value="1"/>
</dbReference>
<dbReference type="InterPro" id="IPR015111">
    <property type="entry name" value="Regulatory_HutP"/>
</dbReference>
<dbReference type="InterPro" id="IPR023552">
    <property type="entry name" value="Regulatory_HutP_bacillales"/>
</dbReference>
<dbReference type="InterPro" id="IPR036482">
    <property type="entry name" value="Regulatory_HutP_sf"/>
</dbReference>
<dbReference type="NCBIfam" id="NF002838">
    <property type="entry name" value="PRK03065.1"/>
    <property type="match status" value="1"/>
</dbReference>
<dbReference type="Pfam" id="PF09021">
    <property type="entry name" value="HutP"/>
    <property type="match status" value="1"/>
</dbReference>
<dbReference type="SUPFAM" id="SSF111064">
    <property type="entry name" value="Hut operon positive regulatory protein HutP"/>
    <property type="match status" value="1"/>
</dbReference>
<feature type="chain" id="PRO_1000046822" description="Hut operon positive regulatory protein">
    <location>
        <begin position="1"/>
        <end position="146"/>
    </location>
</feature>